<keyword id="KW-0167">Capsid protein</keyword>
<keyword id="KW-1139">Helical capsid protein</keyword>
<keyword id="KW-1035">Host cytoplasm</keyword>
<keyword id="KW-0687">Ribonucleoprotein</keyword>
<keyword id="KW-0694">RNA-binding</keyword>
<keyword id="KW-0543">Viral nucleoprotein</keyword>
<keyword id="KW-0946">Virion</keyword>
<proteinExistence type="inferred from homology"/>
<reference key="1">
    <citation type="journal article" date="2005" name="Arch. Virol.">
        <title>Complete genome sequences of Chandipura and Isfahan vesiculoviruses.</title>
        <authorList>
            <person name="Marriott A.C."/>
        </authorList>
    </citation>
    <scope>NUCLEOTIDE SEQUENCE [GENOMIC RNA]</scope>
</reference>
<gene>
    <name type="primary">N</name>
</gene>
<feature type="chain" id="PRO_0000287266" description="Nucleoprotein">
    <location>
        <begin position="1"/>
        <end position="423"/>
    </location>
</feature>
<feature type="region of interest" description="Interaction with the phosphoprotein" evidence="1">
    <location>
        <begin position="351"/>
        <end position="391"/>
    </location>
</feature>
<feature type="binding site" evidence="1">
    <location>
        <position position="144"/>
    </location>
    <ligand>
        <name>RNA</name>
        <dbReference type="ChEBI" id="CHEBI:33697"/>
    </ligand>
</feature>
<feature type="binding site" evidence="1">
    <location>
        <position position="153"/>
    </location>
    <ligand>
        <name>RNA</name>
        <dbReference type="ChEBI" id="CHEBI:33697"/>
    </ligand>
</feature>
<feature type="binding site" evidence="1">
    <location>
        <position position="207"/>
    </location>
    <ligand>
        <name>RNA</name>
        <dbReference type="ChEBI" id="CHEBI:33697"/>
    </ligand>
</feature>
<feature type="binding site" evidence="1">
    <location>
        <position position="215"/>
    </location>
    <ligand>
        <name>RNA</name>
        <dbReference type="ChEBI" id="CHEBI:33697"/>
    </ligand>
</feature>
<feature type="binding site" evidence="1">
    <location>
        <position position="287"/>
    </location>
    <ligand>
        <name>RNA</name>
        <dbReference type="ChEBI" id="CHEBI:33697"/>
    </ligand>
</feature>
<feature type="binding site" evidence="1">
    <location>
        <position position="318"/>
    </location>
    <ligand>
        <name>RNA</name>
        <dbReference type="ChEBI" id="CHEBI:33697"/>
    </ligand>
</feature>
<feature type="binding site" evidence="1">
    <location>
        <position position="409"/>
    </location>
    <ligand>
        <name>RNA</name>
        <dbReference type="ChEBI" id="CHEBI:33697"/>
    </ligand>
</feature>
<organism>
    <name type="scientific">Isfahan virus</name>
    <name type="common">ISFV</name>
    <dbReference type="NCBI Taxonomy" id="290008"/>
    <lineage>
        <taxon>Viruses</taxon>
        <taxon>Riboviria</taxon>
        <taxon>Orthornavirae</taxon>
        <taxon>Negarnaviricota</taxon>
        <taxon>Haploviricotina</taxon>
        <taxon>Monjiviricetes</taxon>
        <taxon>Mononegavirales</taxon>
        <taxon>Rhabdoviridae</taxon>
        <taxon>Alpharhabdovirinae</taxon>
        <taxon>Vesiculovirus</taxon>
        <taxon>Vesiculovirus isfahan</taxon>
    </lineage>
</organism>
<comment type="function">
    <text evidence="1">Encapsidates the genome in a ratio of one N per nine ribonucleotides, protecting it from nucleases. The encapsidated genomic RNA is termed the NC and serves as template for transcription and replication. The nucleocapsid is bullet-shaped with the tip containing 8 turns of a conical spiral before reaching the helical cylindrical trunk. Nucleocapsid assembly is concomitant with replication, therefore viral replication depends on the intracellular concentration of free N, termed N(0). All replicative products are resistant to nucleases.</text>
</comment>
<comment type="subunit">
    <text evidence="1">Homomultimerizes to form the nucleocapsid. Binds to viral genomic RNA; this interaction contributes to the virion assembly. N in the nucleocapsid interacts (via C-terminus) with the P protein (via C-terminus); this interaction allows to package the L polymerase in the virion and positions the polymerase on the template, since P acts as a bridge between N and L. N(0) interacts with the P protein; this interaction prevents the uncontrolled aggregation of N(0). Interacts with the matrix protein (inner layer); this interaction contributes to the virion assembly. Interacts with the L polymerase.</text>
</comment>
<comment type="subcellular location">
    <subcellularLocation>
        <location evidence="1">Virion</location>
    </subcellularLocation>
    <subcellularLocation>
        <location evidence="1">Host cytoplasm</location>
    </subcellularLocation>
    <text evidence="1">The nucleocapsid is synthesized in the cytoplasm, and is subsequently transported via microtubules to the cell periphery. About 1240 copies of N are present in the virion.</text>
</comment>
<comment type="similarity">
    <text evidence="2">Belongs to the vesiculovirus nucleocapsid protein family.</text>
</comment>
<organismHost>
    <name type="scientific">Gerbillinae</name>
    <name type="common">gerbils</name>
    <dbReference type="NCBI Taxonomy" id="10045"/>
</organismHost>
<organismHost>
    <name type="scientific">Homo sapiens</name>
    <name type="common">Human</name>
    <dbReference type="NCBI Taxonomy" id="9606"/>
</organismHost>
<organismHost>
    <name type="scientific">Phlebotomus papatasi</name>
    <name type="common">Sandfly</name>
    <dbReference type="NCBI Taxonomy" id="29031"/>
</organismHost>
<evidence type="ECO:0000250" key="1">
    <source>
        <dbReference type="UniProtKB" id="P03521"/>
    </source>
</evidence>
<evidence type="ECO:0000305" key="2"/>
<dbReference type="EMBL" id="AJ810084">
    <property type="protein sequence ID" value="CAH17544.1"/>
    <property type="molecule type" value="Genomic_RNA"/>
</dbReference>
<dbReference type="RefSeq" id="YP_007641382.1">
    <property type="nucleotide sequence ID" value="NC_020806.1"/>
</dbReference>
<dbReference type="SMR" id="Q5K2K7"/>
<dbReference type="GeneID" id="14857918"/>
<dbReference type="KEGG" id="vg:14857918"/>
<dbReference type="OrthoDB" id="22890at10239"/>
<dbReference type="Proteomes" id="UP000204017">
    <property type="component" value="Genome"/>
</dbReference>
<dbReference type="GO" id="GO:0019029">
    <property type="term" value="C:helical viral capsid"/>
    <property type="evidence" value="ECO:0007669"/>
    <property type="project" value="UniProtKB-KW"/>
</dbReference>
<dbReference type="GO" id="GO:0030430">
    <property type="term" value="C:host cell cytoplasm"/>
    <property type="evidence" value="ECO:0007669"/>
    <property type="project" value="UniProtKB-SubCell"/>
</dbReference>
<dbReference type="GO" id="GO:1990904">
    <property type="term" value="C:ribonucleoprotein complex"/>
    <property type="evidence" value="ECO:0007669"/>
    <property type="project" value="UniProtKB-KW"/>
</dbReference>
<dbReference type="GO" id="GO:0019013">
    <property type="term" value="C:viral nucleocapsid"/>
    <property type="evidence" value="ECO:0007669"/>
    <property type="project" value="UniProtKB-KW"/>
</dbReference>
<dbReference type="GO" id="GO:0003723">
    <property type="term" value="F:RNA binding"/>
    <property type="evidence" value="ECO:0007669"/>
    <property type="project" value="UniProtKB-KW"/>
</dbReference>
<dbReference type="Gene3D" id="1.10.3610.10">
    <property type="entry name" value="Nucleoprotein"/>
    <property type="match status" value="1"/>
</dbReference>
<dbReference type="Gene3D" id="1.10.3570.10">
    <property type="entry name" value="Rhabdovirus nucleocapsid protein like domain"/>
    <property type="match status" value="1"/>
</dbReference>
<dbReference type="InterPro" id="IPR000448">
    <property type="entry name" value="Rhabdo_ncapsid"/>
</dbReference>
<dbReference type="InterPro" id="IPR023331">
    <property type="entry name" value="Rhabdovirus_ncapsid_C"/>
</dbReference>
<dbReference type="InterPro" id="IPR023330">
    <property type="entry name" value="Rhabdovirus_ncapsid_N"/>
</dbReference>
<dbReference type="InterPro" id="IPR035961">
    <property type="entry name" value="Rhabdovirus_nucleoprotein-like"/>
</dbReference>
<dbReference type="Pfam" id="PF00945">
    <property type="entry name" value="Rhabdo_ncap"/>
    <property type="match status" value="1"/>
</dbReference>
<dbReference type="SUPFAM" id="SSF140809">
    <property type="entry name" value="Rhabdovirus nucleoprotein-like"/>
    <property type="match status" value="1"/>
</dbReference>
<protein>
    <recommendedName>
        <fullName>Nucleoprotein</fullName>
        <shortName>NP</shortName>
    </recommendedName>
    <alternativeName>
        <fullName>Nucleocapsid protein</fullName>
        <shortName>Protein N</shortName>
    </alternativeName>
</protein>
<name>NCAP_ISFV</name>
<sequence>MTSVVKRIATGSSVLAVLPANEDPVEFPGDYFLQNPGKIRVCINRKLDVATLRQYVYEGLKNGDVHVCHINSYLYQVLKDTRDEAQSDWISFGVSLAVKGGIVSVFDTLMIEDYRGEAPDGRKCDGRTIDDDKWLPMLILGLYRVSRATQEDYKKSLLQKLYAQCKLRSPQAEELVEDAAEFYEVWSNDSNFLKLVAAIDMFFHKFKNHADAGLRWGTIVSRFKDCAALATLSHVQKVTGLSIKEVFTWVLNKSVEDELCRMMKERQEVDKADSYMPYLIDFGISTKSPYSSVKNPCFHFWGQLTALLVHSHRAKNARVPEDIPYNELTTAAWLFAYAMGRSSGLEQRFTTDDSYYQEDEDINKGLGVKAPTTRDVQMWLAWWSDIGKVPTQDMETFARREVLGLTEIRSKTIGEYAKKTFSV</sequence>
<accession>Q5K2K7</accession>